<accession>Q2NZY5</accession>
<gene>
    <name evidence="1" type="primary">rplC</name>
    <name type="ordered locus">XOO3387</name>
</gene>
<reference key="1">
    <citation type="journal article" date="2005" name="Jpn. Agric. Res. Q.">
        <title>Genome sequence of Xanthomonas oryzae pv. oryzae suggests contribution of large numbers of effector genes and insertion sequences to its race diversity.</title>
        <authorList>
            <person name="Ochiai H."/>
            <person name="Inoue Y."/>
            <person name="Takeya M."/>
            <person name="Sasaki A."/>
            <person name="Kaku H."/>
        </authorList>
    </citation>
    <scope>NUCLEOTIDE SEQUENCE [LARGE SCALE GENOMIC DNA]</scope>
    <source>
        <strain>MAFF 311018</strain>
    </source>
</reference>
<comment type="function">
    <text evidence="1">One of the primary rRNA binding proteins, it binds directly near the 3'-end of the 23S rRNA, where it nucleates assembly of the 50S subunit.</text>
</comment>
<comment type="subunit">
    <text evidence="1">Part of the 50S ribosomal subunit. Forms a cluster with proteins L14 and L19.</text>
</comment>
<comment type="PTM">
    <text evidence="1">Methylated by PrmB.</text>
</comment>
<comment type="similarity">
    <text evidence="1">Belongs to the universal ribosomal protein uL3 family.</text>
</comment>
<proteinExistence type="inferred from homology"/>
<sequence>MTKKYSLGFVGRKAGMSRIFTEDGRSVPVTLIEATPNRIAQIKTVEVDGYSAVQITVGARRAALVNKPAAGHFAKAKVEAGRGLWEFRVEDAHLGDFAVGGEIKADIFEVGQKVDVQGVTKGKGFQGTIKRYNFRMGDATHGNSLSHRAPGSLGQRQTPGRVFPGKKMSGHMGAVQQSTQNLEVVKVDVERGLIAIHGAVPGAAGGDVIVRPASKA</sequence>
<name>RL3_XANOM</name>
<organism>
    <name type="scientific">Xanthomonas oryzae pv. oryzae (strain MAFF 311018)</name>
    <dbReference type="NCBI Taxonomy" id="342109"/>
    <lineage>
        <taxon>Bacteria</taxon>
        <taxon>Pseudomonadati</taxon>
        <taxon>Pseudomonadota</taxon>
        <taxon>Gammaproteobacteria</taxon>
        <taxon>Lysobacterales</taxon>
        <taxon>Lysobacteraceae</taxon>
        <taxon>Xanthomonas</taxon>
    </lineage>
</organism>
<evidence type="ECO:0000255" key="1">
    <source>
        <dbReference type="HAMAP-Rule" id="MF_01325"/>
    </source>
</evidence>
<evidence type="ECO:0000305" key="2"/>
<feature type="chain" id="PRO_0000241435" description="Large ribosomal subunit protein uL3">
    <location>
        <begin position="1"/>
        <end position="216"/>
    </location>
</feature>
<feature type="modified residue" description="N5-methylglutamine" evidence="1">
    <location>
        <position position="157"/>
    </location>
</feature>
<keyword id="KW-0488">Methylation</keyword>
<keyword id="KW-0687">Ribonucleoprotein</keyword>
<keyword id="KW-0689">Ribosomal protein</keyword>
<keyword id="KW-0694">RNA-binding</keyword>
<keyword id="KW-0699">rRNA-binding</keyword>
<dbReference type="EMBL" id="AP008229">
    <property type="protein sequence ID" value="BAE70142.1"/>
    <property type="molecule type" value="Genomic_DNA"/>
</dbReference>
<dbReference type="RefSeq" id="WP_011260029.1">
    <property type="nucleotide sequence ID" value="NC_007705.1"/>
</dbReference>
<dbReference type="SMR" id="Q2NZY5"/>
<dbReference type="KEGG" id="xom:XOO3387"/>
<dbReference type="HOGENOM" id="CLU_044142_4_1_6"/>
<dbReference type="GO" id="GO:0022625">
    <property type="term" value="C:cytosolic large ribosomal subunit"/>
    <property type="evidence" value="ECO:0007669"/>
    <property type="project" value="TreeGrafter"/>
</dbReference>
<dbReference type="GO" id="GO:0019843">
    <property type="term" value="F:rRNA binding"/>
    <property type="evidence" value="ECO:0007669"/>
    <property type="project" value="UniProtKB-UniRule"/>
</dbReference>
<dbReference type="GO" id="GO:0003735">
    <property type="term" value="F:structural constituent of ribosome"/>
    <property type="evidence" value="ECO:0007669"/>
    <property type="project" value="InterPro"/>
</dbReference>
<dbReference type="GO" id="GO:0006412">
    <property type="term" value="P:translation"/>
    <property type="evidence" value="ECO:0007669"/>
    <property type="project" value="UniProtKB-UniRule"/>
</dbReference>
<dbReference type="FunFam" id="2.40.30.10:FF:000004">
    <property type="entry name" value="50S ribosomal protein L3"/>
    <property type="match status" value="1"/>
</dbReference>
<dbReference type="FunFam" id="3.30.160.810:FF:000001">
    <property type="entry name" value="50S ribosomal protein L3"/>
    <property type="match status" value="1"/>
</dbReference>
<dbReference type="Gene3D" id="3.30.160.810">
    <property type="match status" value="1"/>
</dbReference>
<dbReference type="Gene3D" id="2.40.30.10">
    <property type="entry name" value="Translation factors"/>
    <property type="match status" value="1"/>
</dbReference>
<dbReference type="HAMAP" id="MF_01325_B">
    <property type="entry name" value="Ribosomal_uL3_B"/>
    <property type="match status" value="1"/>
</dbReference>
<dbReference type="InterPro" id="IPR000597">
    <property type="entry name" value="Ribosomal_uL3"/>
</dbReference>
<dbReference type="InterPro" id="IPR019927">
    <property type="entry name" value="Ribosomal_uL3_bac/org-type"/>
</dbReference>
<dbReference type="InterPro" id="IPR019926">
    <property type="entry name" value="Ribosomal_uL3_CS"/>
</dbReference>
<dbReference type="InterPro" id="IPR009000">
    <property type="entry name" value="Transl_B-barrel_sf"/>
</dbReference>
<dbReference type="NCBIfam" id="TIGR03625">
    <property type="entry name" value="L3_bact"/>
    <property type="match status" value="1"/>
</dbReference>
<dbReference type="PANTHER" id="PTHR11229">
    <property type="entry name" value="50S RIBOSOMAL PROTEIN L3"/>
    <property type="match status" value="1"/>
</dbReference>
<dbReference type="PANTHER" id="PTHR11229:SF16">
    <property type="entry name" value="LARGE RIBOSOMAL SUBUNIT PROTEIN UL3C"/>
    <property type="match status" value="1"/>
</dbReference>
<dbReference type="Pfam" id="PF00297">
    <property type="entry name" value="Ribosomal_L3"/>
    <property type="match status" value="1"/>
</dbReference>
<dbReference type="SUPFAM" id="SSF50447">
    <property type="entry name" value="Translation proteins"/>
    <property type="match status" value="1"/>
</dbReference>
<dbReference type="PROSITE" id="PS00474">
    <property type="entry name" value="RIBOSOMAL_L3"/>
    <property type="match status" value="1"/>
</dbReference>
<protein>
    <recommendedName>
        <fullName evidence="1">Large ribosomal subunit protein uL3</fullName>
    </recommendedName>
    <alternativeName>
        <fullName evidence="2">50S ribosomal protein L3</fullName>
    </alternativeName>
</protein>